<protein>
    <recommendedName>
        <fullName evidence="2">Small ribosomal subunit protein uS4m</fullName>
    </recommendedName>
    <alternativeName>
        <fullName>Ribosomal protein S4, mitochondrial</fullName>
    </alternativeName>
</protein>
<keyword id="KW-0496">Mitochondrion</keyword>
<keyword id="KW-0687">Ribonucleoprotein</keyword>
<keyword id="KW-0689">Ribosomal protein</keyword>
<keyword id="KW-0694">RNA-binding</keyword>
<keyword id="KW-0699">rRNA-binding</keyword>
<name>RT04_PROWI</name>
<comment type="subcellular location">
    <subcellularLocation>
        <location>Mitochondrion</location>
    </subcellularLocation>
</comment>
<comment type="similarity">
    <text evidence="2">Belongs to the universal ribosomal protein uS4 family.</text>
</comment>
<sequence>MKISLKCLNTHTAEIYRKCLLLSDSTVNVSSVDFTNQSKLNLLKQEKKSIESFNKNSLLNISNFRDLERQEKDIQKKTSKKVYKKSYSRSTKSIYSRTKIINERNKLHTLNQQIIFSTLARIHLKKKINLLFPVQEFLFELSKHRNKSAGSKSREYLEILLCVKKLKMFYGFIPLKQLHKILVQAKAMPGYFSKNFFSLIEKRLDVVLYRSGFTKTIVAARQACRHSQIYVNSKVCRIPSTILESGDIISYKNQLDSLKTAEIKNNLFSNINTNVSGNEVSNNVSNKVSNKISSTLALNKQSLLLLLFCAKSIYNESFFVSNKRKFKSNEVTFDNKKEITSAIDYTKYLQIKNSRKKYKLITLNNNLDSLSFNIFDKEILNSLSSKQNLPVNKQNIVEIENKKTNKFNTFSLLFQNLTSFSKSIESYSSVLALKLQDHLLNIKGKRNEVSKNINKIERSQKDNVFINILQKINRPTHLEISSITNSIIFLYSPQRIYLPFYVDIDILRKSL</sequence>
<dbReference type="EMBL" id="U02970">
    <property type="protein sequence ID" value="AAD12659.1"/>
    <property type="molecule type" value="Genomic_DNA"/>
</dbReference>
<dbReference type="PIR" id="T11940">
    <property type="entry name" value="T11940"/>
</dbReference>
<dbReference type="RefSeq" id="NP_042271.1">
    <property type="nucleotide sequence ID" value="NC_001613.1"/>
</dbReference>
<dbReference type="GeneID" id="802111"/>
<dbReference type="GO" id="GO:0005739">
    <property type="term" value="C:mitochondrion"/>
    <property type="evidence" value="ECO:0007669"/>
    <property type="project" value="UniProtKB-SubCell"/>
</dbReference>
<dbReference type="GO" id="GO:0015935">
    <property type="term" value="C:small ribosomal subunit"/>
    <property type="evidence" value="ECO:0007669"/>
    <property type="project" value="TreeGrafter"/>
</dbReference>
<dbReference type="GO" id="GO:0019843">
    <property type="term" value="F:rRNA binding"/>
    <property type="evidence" value="ECO:0007669"/>
    <property type="project" value="UniProtKB-KW"/>
</dbReference>
<dbReference type="GO" id="GO:0003735">
    <property type="term" value="F:structural constituent of ribosome"/>
    <property type="evidence" value="ECO:0007669"/>
    <property type="project" value="TreeGrafter"/>
</dbReference>
<dbReference type="GO" id="GO:0042274">
    <property type="term" value="P:ribosomal small subunit biogenesis"/>
    <property type="evidence" value="ECO:0007669"/>
    <property type="project" value="TreeGrafter"/>
</dbReference>
<dbReference type="CDD" id="cd00165">
    <property type="entry name" value="S4"/>
    <property type="match status" value="1"/>
</dbReference>
<dbReference type="Gene3D" id="1.10.1050.10">
    <property type="entry name" value="Ribosomal Protein S4 Delta 41, Chain A, domain 1"/>
    <property type="match status" value="1"/>
</dbReference>
<dbReference type="Gene3D" id="3.10.290.10">
    <property type="entry name" value="RNA-binding S4 domain"/>
    <property type="match status" value="1"/>
</dbReference>
<dbReference type="InterPro" id="IPR022801">
    <property type="entry name" value="Ribosomal_uS4"/>
</dbReference>
<dbReference type="InterPro" id="IPR002942">
    <property type="entry name" value="S4_RNA-bd"/>
</dbReference>
<dbReference type="InterPro" id="IPR036986">
    <property type="entry name" value="S4_RNA-bd_sf"/>
</dbReference>
<dbReference type="PANTHER" id="PTHR11831">
    <property type="entry name" value="30S 40S RIBOSOMAL PROTEIN"/>
    <property type="match status" value="1"/>
</dbReference>
<dbReference type="PANTHER" id="PTHR11831:SF4">
    <property type="entry name" value="SMALL RIBOSOMAL SUBUNIT PROTEIN US4M"/>
    <property type="match status" value="1"/>
</dbReference>
<dbReference type="Pfam" id="PF01479">
    <property type="entry name" value="S4"/>
    <property type="match status" value="1"/>
</dbReference>
<dbReference type="SMART" id="SM00363">
    <property type="entry name" value="S4"/>
    <property type="match status" value="1"/>
</dbReference>
<dbReference type="SUPFAM" id="SSF55174">
    <property type="entry name" value="Alpha-L RNA-binding motif"/>
    <property type="match status" value="1"/>
</dbReference>
<dbReference type="PROSITE" id="PS50889">
    <property type="entry name" value="S4"/>
    <property type="match status" value="1"/>
</dbReference>
<evidence type="ECO:0000255" key="1">
    <source>
        <dbReference type="PROSITE-ProRule" id="PRU00182"/>
    </source>
</evidence>
<evidence type="ECO:0000305" key="2"/>
<organism>
    <name type="scientific">Prototheca wickerhamii</name>
    <dbReference type="NCBI Taxonomy" id="3111"/>
    <lineage>
        <taxon>Eukaryota</taxon>
        <taxon>Viridiplantae</taxon>
        <taxon>Chlorophyta</taxon>
        <taxon>core chlorophytes</taxon>
        <taxon>Trebouxiophyceae</taxon>
        <taxon>Chlorellales</taxon>
        <taxon>Chlorellaceae</taxon>
        <taxon>Prototheca</taxon>
    </lineage>
</organism>
<reference key="1">
    <citation type="journal article" date="1994" name="J. Mol. Biol.">
        <title>Complete sequence of the mitochondrial DNA of the chlorophyte alga Prototheca wickerhamii. Gene content and genome organization.</title>
        <authorList>
            <person name="Wolff G."/>
            <person name="Plante I."/>
            <person name="Lang B.F."/>
            <person name="Kueck U."/>
            <person name="Burger G."/>
        </authorList>
    </citation>
    <scope>NUCLEOTIDE SEQUENCE [GENOMIC DNA]</scope>
    <source>
        <strain>263-11</strain>
    </source>
</reference>
<geneLocation type="mitochondrion"/>
<feature type="chain" id="PRO_0000132686" description="Small ribosomal subunit protein uS4m">
    <location>
        <begin position="1"/>
        <end position="511"/>
    </location>
</feature>
<feature type="domain" description="S4 RNA-binding" evidence="1">
    <location>
        <begin position="202"/>
        <end position="272"/>
    </location>
</feature>
<proteinExistence type="inferred from homology"/>
<accession>P46743</accession>
<gene>
    <name type="primary">RPS4</name>
</gene>